<sequence length="640" mass="74562">MKIKVKLPDGKEKEYDRGITPAEIAKELGIKKAIGAVVNGELWDLKRPIENDCELRLVTLEDPEAPEFYRHTMAHILAQAVMRLYGKENVKLGIGPTIENGFYYDFDIKNGRLTEEDLPKIEQEMKKIIKENLPIERKEISKEEARELFRDQPYKLELIEEIEGNRVTIYRQGEFVDLCRGPHLPSTGIVKHFKLLSVSGAYWRGSEKNPMLTRVYGTAFAKKEDLDNYLKFLEEAQRRDHRKLGPQLELFMLNTEYAPGMPFFLPKGVVVLNELMKFSRELHRERGYQEIFTPLIMNEQLWKISGHWDHYAENMYFIEKDEERYAVKPMNCPGHILVYKSRTVSYRDLPLRFFEFGRVHRYERSGVLHGLMRVRSFTQDDAHIFCTPDQIEEEILGVLDLINTIYSQFGFTYRVELSTMPEDHMGDEAIWEKATTALKNALERAGLSYKVNEGEGAFYGPKIDFHIRDSIGREWQCATIQLDFMMPEKFNVTYIGPDNKEHRAVMIHRAIYGSLERFFGILIEHFAGAFPTWLAPIQVAVIPISEKHNDGAEKVARRISQEGFRVFFDNRRETLGYRIRQAQTQKIPYMIIIGDKELESGKISVRTRTGKEIKDVDPEHFVETLRNEVLSRKLELSMEG</sequence>
<organism>
    <name type="scientific">Thermotoga maritima (strain ATCC 43589 / DSM 3109 / JCM 10099 / NBRC 100826 / MSB8)</name>
    <dbReference type="NCBI Taxonomy" id="243274"/>
    <lineage>
        <taxon>Bacteria</taxon>
        <taxon>Thermotogati</taxon>
        <taxon>Thermotogota</taxon>
        <taxon>Thermotogae</taxon>
        <taxon>Thermotogales</taxon>
        <taxon>Thermotogaceae</taxon>
        <taxon>Thermotoga</taxon>
    </lineage>
</organism>
<name>SYT_THEMA</name>
<reference key="1">
    <citation type="journal article" date="1999" name="Nature">
        <title>Evidence for lateral gene transfer between Archaea and Bacteria from genome sequence of Thermotoga maritima.</title>
        <authorList>
            <person name="Nelson K.E."/>
            <person name="Clayton R.A."/>
            <person name="Gill S.R."/>
            <person name="Gwinn M.L."/>
            <person name="Dodson R.J."/>
            <person name="Haft D.H."/>
            <person name="Hickey E.K."/>
            <person name="Peterson J.D."/>
            <person name="Nelson W.C."/>
            <person name="Ketchum K.A."/>
            <person name="McDonald L.A."/>
            <person name="Utterback T.R."/>
            <person name="Malek J.A."/>
            <person name="Linher K.D."/>
            <person name="Garrett M.M."/>
            <person name="Stewart A.M."/>
            <person name="Cotton M.D."/>
            <person name="Pratt M.S."/>
            <person name="Phillips C.A."/>
            <person name="Richardson D.L."/>
            <person name="Heidelberg J.F."/>
            <person name="Sutton G.G."/>
            <person name="Fleischmann R.D."/>
            <person name="Eisen J.A."/>
            <person name="White O."/>
            <person name="Salzberg S.L."/>
            <person name="Smith H.O."/>
            <person name="Venter J.C."/>
            <person name="Fraser C.M."/>
        </authorList>
    </citation>
    <scope>NUCLEOTIDE SEQUENCE [LARGE SCALE GENOMIC DNA]</scope>
    <source>
        <strain>ATCC 43589 / DSM 3109 / JCM 10099 / NBRC 100826 / MSB8</strain>
    </source>
</reference>
<protein>
    <recommendedName>
        <fullName evidence="1">Threonine--tRNA ligase</fullName>
        <ecNumber evidence="1">6.1.1.3</ecNumber>
    </recommendedName>
    <alternativeName>
        <fullName evidence="1">Threonyl-tRNA synthetase</fullName>
        <shortName evidence="1">ThrRS</shortName>
    </alternativeName>
</protein>
<feature type="chain" id="PRO_0000101073" description="Threonine--tRNA ligase">
    <location>
        <begin position="1"/>
        <end position="640"/>
    </location>
</feature>
<feature type="domain" description="TGS" evidence="2">
    <location>
        <begin position="1"/>
        <end position="59"/>
    </location>
</feature>
<feature type="region of interest" description="Catalytic" evidence="1">
    <location>
        <begin position="240"/>
        <end position="531"/>
    </location>
</feature>
<feature type="binding site" evidence="1">
    <location>
        <position position="332"/>
    </location>
    <ligand>
        <name>Zn(2+)</name>
        <dbReference type="ChEBI" id="CHEBI:29105"/>
    </ligand>
</feature>
<feature type="binding site" evidence="1">
    <location>
        <position position="383"/>
    </location>
    <ligand>
        <name>Zn(2+)</name>
        <dbReference type="ChEBI" id="CHEBI:29105"/>
    </ligand>
</feature>
<feature type="binding site" evidence="1">
    <location>
        <position position="508"/>
    </location>
    <ligand>
        <name>Zn(2+)</name>
        <dbReference type="ChEBI" id="CHEBI:29105"/>
    </ligand>
</feature>
<proteinExistence type="inferred from homology"/>
<dbReference type="EC" id="6.1.1.3" evidence="1"/>
<dbReference type="EMBL" id="AE000512">
    <property type="protein sequence ID" value="AAD35821.1"/>
    <property type="molecule type" value="Genomic_DNA"/>
</dbReference>
<dbReference type="PIR" id="G72339">
    <property type="entry name" value="G72339"/>
</dbReference>
<dbReference type="RefSeq" id="NP_228549.1">
    <property type="nucleotide sequence ID" value="NC_000853.1"/>
</dbReference>
<dbReference type="RefSeq" id="WP_004080983.1">
    <property type="nucleotide sequence ID" value="NC_000853.1"/>
</dbReference>
<dbReference type="SMR" id="Q9WZJ9"/>
<dbReference type="FunCoup" id="Q9WZJ9">
    <property type="interactions" value="362"/>
</dbReference>
<dbReference type="STRING" id="243274.TM_0740"/>
<dbReference type="PaxDb" id="243274-THEMA_00955"/>
<dbReference type="EnsemblBacteria" id="AAD35821">
    <property type="protein sequence ID" value="AAD35821"/>
    <property type="gene ID" value="TM_0740"/>
</dbReference>
<dbReference type="KEGG" id="tma:TM0740"/>
<dbReference type="KEGG" id="tmi:THEMA_00955"/>
<dbReference type="KEGG" id="tmm:Tmari_0741"/>
<dbReference type="KEGG" id="tmw:THMA_0758"/>
<dbReference type="eggNOG" id="COG0441">
    <property type="taxonomic scope" value="Bacteria"/>
</dbReference>
<dbReference type="InParanoid" id="Q9WZJ9"/>
<dbReference type="OrthoDB" id="9802304at2"/>
<dbReference type="Proteomes" id="UP000008183">
    <property type="component" value="Chromosome"/>
</dbReference>
<dbReference type="GO" id="GO:0005737">
    <property type="term" value="C:cytoplasm"/>
    <property type="evidence" value="ECO:0007669"/>
    <property type="project" value="UniProtKB-SubCell"/>
</dbReference>
<dbReference type="GO" id="GO:0005524">
    <property type="term" value="F:ATP binding"/>
    <property type="evidence" value="ECO:0007669"/>
    <property type="project" value="UniProtKB-UniRule"/>
</dbReference>
<dbReference type="GO" id="GO:0046872">
    <property type="term" value="F:metal ion binding"/>
    <property type="evidence" value="ECO:0007669"/>
    <property type="project" value="UniProtKB-KW"/>
</dbReference>
<dbReference type="GO" id="GO:0004829">
    <property type="term" value="F:threonine-tRNA ligase activity"/>
    <property type="evidence" value="ECO:0000318"/>
    <property type="project" value="GO_Central"/>
</dbReference>
<dbReference type="GO" id="GO:0000049">
    <property type="term" value="F:tRNA binding"/>
    <property type="evidence" value="ECO:0007669"/>
    <property type="project" value="UniProtKB-KW"/>
</dbReference>
<dbReference type="GO" id="GO:0006435">
    <property type="term" value="P:threonyl-tRNA aminoacylation"/>
    <property type="evidence" value="ECO:0000318"/>
    <property type="project" value="GO_Central"/>
</dbReference>
<dbReference type="CDD" id="cd01667">
    <property type="entry name" value="TGS_ThrRS"/>
    <property type="match status" value="1"/>
</dbReference>
<dbReference type="CDD" id="cd00860">
    <property type="entry name" value="ThrRS_anticodon"/>
    <property type="match status" value="1"/>
</dbReference>
<dbReference type="CDD" id="cd00771">
    <property type="entry name" value="ThrRS_core"/>
    <property type="match status" value="1"/>
</dbReference>
<dbReference type="FunFam" id="3.30.54.20:FF:000002">
    <property type="entry name" value="Threonine--tRNA ligase"/>
    <property type="match status" value="1"/>
</dbReference>
<dbReference type="FunFam" id="3.30.930.10:FF:000002">
    <property type="entry name" value="Threonine--tRNA ligase"/>
    <property type="match status" value="1"/>
</dbReference>
<dbReference type="FunFam" id="3.40.50.800:FF:000001">
    <property type="entry name" value="Threonine--tRNA ligase"/>
    <property type="match status" value="1"/>
</dbReference>
<dbReference type="FunFam" id="3.30.980.10:FF:000005">
    <property type="entry name" value="Threonyl-tRNA synthetase, mitochondrial"/>
    <property type="match status" value="1"/>
</dbReference>
<dbReference type="Gene3D" id="3.10.20.30">
    <property type="match status" value="1"/>
</dbReference>
<dbReference type="Gene3D" id="3.40.50.800">
    <property type="entry name" value="Anticodon-binding domain"/>
    <property type="match status" value="1"/>
</dbReference>
<dbReference type="Gene3D" id="3.30.930.10">
    <property type="entry name" value="Bira Bifunctional Protein, Domain 2"/>
    <property type="match status" value="1"/>
</dbReference>
<dbReference type="Gene3D" id="3.30.980.10">
    <property type="entry name" value="Threonyl-trna Synthetase, Chain A, domain 2"/>
    <property type="match status" value="1"/>
</dbReference>
<dbReference type="HAMAP" id="MF_00184">
    <property type="entry name" value="Thr_tRNA_synth"/>
    <property type="match status" value="1"/>
</dbReference>
<dbReference type="InterPro" id="IPR002314">
    <property type="entry name" value="aa-tRNA-synt_IIb"/>
</dbReference>
<dbReference type="InterPro" id="IPR006195">
    <property type="entry name" value="aa-tRNA-synth_II"/>
</dbReference>
<dbReference type="InterPro" id="IPR045864">
    <property type="entry name" value="aa-tRNA-synth_II/BPL/LPL"/>
</dbReference>
<dbReference type="InterPro" id="IPR004154">
    <property type="entry name" value="Anticodon-bd"/>
</dbReference>
<dbReference type="InterPro" id="IPR036621">
    <property type="entry name" value="Anticodon-bd_dom_sf"/>
</dbReference>
<dbReference type="InterPro" id="IPR012675">
    <property type="entry name" value="Beta-grasp_dom_sf"/>
</dbReference>
<dbReference type="InterPro" id="IPR004095">
    <property type="entry name" value="TGS"/>
</dbReference>
<dbReference type="InterPro" id="IPR012676">
    <property type="entry name" value="TGS-like"/>
</dbReference>
<dbReference type="InterPro" id="IPR002320">
    <property type="entry name" value="Thr-tRNA-ligase_IIa"/>
</dbReference>
<dbReference type="InterPro" id="IPR018163">
    <property type="entry name" value="Thr/Ala-tRNA-synth_IIc_edit"/>
</dbReference>
<dbReference type="InterPro" id="IPR047246">
    <property type="entry name" value="ThrRS_anticodon"/>
</dbReference>
<dbReference type="InterPro" id="IPR033728">
    <property type="entry name" value="ThrRS_core"/>
</dbReference>
<dbReference type="InterPro" id="IPR012947">
    <property type="entry name" value="tRNA_SAD"/>
</dbReference>
<dbReference type="NCBIfam" id="TIGR00418">
    <property type="entry name" value="thrS"/>
    <property type="match status" value="1"/>
</dbReference>
<dbReference type="PANTHER" id="PTHR11451:SF44">
    <property type="entry name" value="THREONINE--TRNA LIGASE, CHLOROPLASTIC_MITOCHONDRIAL 2"/>
    <property type="match status" value="1"/>
</dbReference>
<dbReference type="PANTHER" id="PTHR11451">
    <property type="entry name" value="THREONINE-TRNA LIGASE"/>
    <property type="match status" value="1"/>
</dbReference>
<dbReference type="Pfam" id="PF03129">
    <property type="entry name" value="HGTP_anticodon"/>
    <property type="match status" value="1"/>
</dbReference>
<dbReference type="Pfam" id="PF02824">
    <property type="entry name" value="TGS"/>
    <property type="match status" value="1"/>
</dbReference>
<dbReference type="Pfam" id="PF00587">
    <property type="entry name" value="tRNA-synt_2b"/>
    <property type="match status" value="1"/>
</dbReference>
<dbReference type="Pfam" id="PF07973">
    <property type="entry name" value="tRNA_SAD"/>
    <property type="match status" value="1"/>
</dbReference>
<dbReference type="PRINTS" id="PR01047">
    <property type="entry name" value="TRNASYNTHTHR"/>
</dbReference>
<dbReference type="SMART" id="SM00863">
    <property type="entry name" value="tRNA_SAD"/>
    <property type="match status" value="1"/>
</dbReference>
<dbReference type="SUPFAM" id="SSF52954">
    <property type="entry name" value="Class II aaRS ABD-related"/>
    <property type="match status" value="1"/>
</dbReference>
<dbReference type="SUPFAM" id="SSF55681">
    <property type="entry name" value="Class II aaRS and biotin synthetases"/>
    <property type="match status" value="1"/>
</dbReference>
<dbReference type="SUPFAM" id="SSF81271">
    <property type="entry name" value="TGS-like"/>
    <property type="match status" value="1"/>
</dbReference>
<dbReference type="SUPFAM" id="SSF55186">
    <property type="entry name" value="ThrRS/AlaRS common domain"/>
    <property type="match status" value="1"/>
</dbReference>
<dbReference type="PROSITE" id="PS50862">
    <property type="entry name" value="AA_TRNA_LIGASE_II"/>
    <property type="match status" value="1"/>
</dbReference>
<dbReference type="PROSITE" id="PS51880">
    <property type="entry name" value="TGS"/>
    <property type="match status" value="1"/>
</dbReference>
<keyword id="KW-0030">Aminoacyl-tRNA synthetase</keyword>
<keyword id="KW-0067">ATP-binding</keyword>
<keyword id="KW-0963">Cytoplasm</keyword>
<keyword id="KW-0436">Ligase</keyword>
<keyword id="KW-0479">Metal-binding</keyword>
<keyword id="KW-0547">Nucleotide-binding</keyword>
<keyword id="KW-0648">Protein biosynthesis</keyword>
<keyword id="KW-1185">Reference proteome</keyword>
<keyword id="KW-0694">RNA-binding</keyword>
<keyword id="KW-0820">tRNA-binding</keyword>
<keyword id="KW-0862">Zinc</keyword>
<evidence type="ECO:0000255" key="1">
    <source>
        <dbReference type="HAMAP-Rule" id="MF_00184"/>
    </source>
</evidence>
<evidence type="ECO:0000255" key="2">
    <source>
        <dbReference type="PROSITE-ProRule" id="PRU01228"/>
    </source>
</evidence>
<gene>
    <name evidence="1" type="primary">thrS</name>
    <name type="ordered locus">TM_0740</name>
</gene>
<comment type="function">
    <text evidence="1">Catalyzes the attachment of threonine to tRNA(Thr) in a two-step reaction: L-threonine is first activated by ATP to form Thr-AMP and then transferred to the acceptor end of tRNA(Thr). Also edits incorrectly charged L-seryl-tRNA(Thr).</text>
</comment>
<comment type="catalytic activity">
    <reaction evidence="1">
        <text>tRNA(Thr) + L-threonine + ATP = L-threonyl-tRNA(Thr) + AMP + diphosphate + H(+)</text>
        <dbReference type="Rhea" id="RHEA:24624"/>
        <dbReference type="Rhea" id="RHEA-COMP:9670"/>
        <dbReference type="Rhea" id="RHEA-COMP:9704"/>
        <dbReference type="ChEBI" id="CHEBI:15378"/>
        <dbReference type="ChEBI" id="CHEBI:30616"/>
        <dbReference type="ChEBI" id="CHEBI:33019"/>
        <dbReference type="ChEBI" id="CHEBI:57926"/>
        <dbReference type="ChEBI" id="CHEBI:78442"/>
        <dbReference type="ChEBI" id="CHEBI:78534"/>
        <dbReference type="ChEBI" id="CHEBI:456215"/>
        <dbReference type="EC" id="6.1.1.3"/>
    </reaction>
</comment>
<comment type="cofactor">
    <cofactor evidence="1">
        <name>Zn(2+)</name>
        <dbReference type="ChEBI" id="CHEBI:29105"/>
    </cofactor>
    <text evidence="1">Binds 1 zinc ion per subunit.</text>
</comment>
<comment type="subunit">
    <text evidence="1">Homodimer.</text>
</comment>
<comment type="subcellular location">
    <subcellularLocation>
        <location evidence="1">Cytoplasm</location>
    </subcellularLocation>
</comment>
<comment type="similarity">
    <text evidence="1">Belongs to the class-II aminoacyl-tRNA synthetase family.</text>
</comment>
<accession>Q9WZJ9</accession>